<name>OPSD_MULSU</name>
<evidence type="ECO:0000250" key="1">
    <source>
        <dbReference type="UniProtKB" id="P02699"/>
    </source>
</evidence>
<evidence type="ECO:0000250" key="2">
    <source>
        <dbReference type="UniProtKB" id="P08100"/>
    </source>
</evidence>
<evidence type="ECO:0000250" key="3">
    <source>
        <dbReference type="UniProtKB" id="P32309"/>
    </source>
</evidence>
<evidence type="ECO:0000250" key="4">
    <source>
        <dbReference type="UniProtKB" id="P35359"/>
    </source>
</evidence>
<evidence type="ECO:0000255" key="5"/>
<evidence type="ECO:0000255" key="6">
    <source>
        <dbReference type="PROSITE-ProRule" id="PRU00521"/>
    </source>
</evidence>
<evidence type="ECO:0000256" key="7">
    <source>
        <dbReference type="SAM" id="MobiDB-lite"/>
    </source>
</evidence>
<evidence type="ECO:0000305" key="8"/>
<keyword id="KW-0966">Cell projection</keyword>
<keyword id="KW-0157">Chromophore</keyword>
<keyword id="KW-1015">Disulfide bond</keyword>
<keyword id="KW-0297">G-protein coupled receptor</keyword>
<keyword id="KW-0325">Glycoprotein</keyword>
<keyword id="KW-0449">Lipoprotein</keyword>
<keyword id="KW-0472">Membrane</keyword>
<keyword id="KW-0564">Palmitate</keyword>
<keyword id="KW-0597">Phosphoprotein</keyword>
<keyword id="KW-0600">Photoreceptor protein</keyword>
<keyword id="KW-0675">Receptor</keyword>
<keyword id="KW-0681">Retinal protein</keyword>
<keyword id="KW-0716">Sensory transduction</keyword>
<keyword id="KW-0807">Transducer</keyword>
<keyword id="KW-0812">Transmembrane</keyword>
<keyword id="KW-1133">Transmembrane helix</keyword>
<keyword id="KW-0844">Vision</keyword>
<accession>Q9YH01</accession>
<comment type="function">
    <text evidence="1 2 3">Photoreceptor required for image-forming vision at low light intensity. While most salt water fish species use retinal as chromophore, most freshwater fish use 3-dehydroretinal, or a mixture of retinal and 3-dehydroretinal (By similarity). Light-induced isomerization of 11-cis to all-trans retinal triggers a conformational change that activates signaling via G-proteins. Subsequent receptor phosphorylation mediates displacement of the bound G-protein alpha subunit by arrestin and terminates signaling (By similarity).</text>
</comment>
<comment type="subcellular location">
    <subcellularLocation>
        <location evidence="2">Membrane</location>
        <topology evidence="2">Multi-pass membrane protein</topology>
    </subcellularLocation>
    <subcellularLocation>
        <location evidence="4">Cell projection</location>
        <location evidence="4">Cilium</location>
        <location evidence="4">Photoreceptor outer segment</location>
    </subcellularLocation>
    <text evidence="2">Synthesized in the inner segment (IS) of rod photoreceptor cells before vectorial transport to disk membranes in the rod outer segment (OS) photosensory cilia.</text>
</comment>
<comment type="PTM">
    <text evidence="1">Phosphorylated on some or all of the serine and threonine residues present in the C-terminal region.</text>
</comment>
<comment type="PTM">
    <text evidence="1">Contains one covalently linked retinal chromophore.</text>
</comment>
<comment type="similarity">
    <text evidence="6">Belongs to the G-protein coupled receptor 1 family. Opsin subfamily.</text>
</comment>
<protein>
    <recommendedName>
        <fullName>Rhodopsin</fullName>
    </recommendedName>
</protein>
<proteinExistence type="evidence at transcript level"/>
<feature type="chain" id="PRO_0000197689" description="Rhodopsin">
    <location>
        <begin position="1"/>
        <end position="354"/>
    </location>
</feature>
<feature type="topological domain" description="Extracellular" evidence="8">
    <location>
        <begin position="1"/>
        <end position="36"/>
    </location>
</feature>
<feature type="transmembrane region" description="Helical; Name=1" evidence="1">
    <location>
        <begin position="37"/>
        <end position="61"/>
    </location>
</feature>
<feature type="topological domain" description="Cytoplasmic" evidence="8">
    <location>
        <begin position="62"/>
        <end position="73"/>
    </location>
</feature>
<feature type="transmembrane region" description="Helical; Name=2" evidence="1">
    <location>
        <begin position="74"/>
        <end position="96"/>
    </location>
</feature>
<feature type="topological domain" description="Extracellular" evidence="8">
    <location>
        <begin position="97"/>
        <end position="110"/>
    </location>
</feature>
<feature type="transmembrane region" description="Helical; Name=3" evidence="1">
    <location>
        <begin position="111"/>
        <end position="133"/>
    </location>
</feature>
<feature type="topological domain" description="Cytoplasmic" evidence="8">
    <location>
        <begin position="134"/>
        <end position="152"/>
    </location>
</feature>
<feature type="transmembrane region" description="Helical; Name=4" evidence="1">
    <location>
        <begin position="153"/>
        <end position="173"/>
    </location>
</feature>
<feature type="topological domain" description="Extracellular" evidence="8">
    <location>
        <begin position="174"/>
        <end position="202"/>
    </location>
</feature>
<feature type="transmembrane region" description="Helical; Name=5" evidence="1">
    <location>
        <begin position="203"/>
        <end position="224"/>
    </location>
</feature>
<feature type="topological domain" description="Cytoplasmic" evidence="8">
    <location>
        <begin position="225"/>
        <end position="252"/>
    </location>
</feature>
<feature type="transmembrane region" description="Helical; Name=6" evidence="1">
    <location>
        <begin position="253"/>
        <end position="274"/>
    </location>
</feature>
<feature type="topological domain" description="Extracellular" evidence="8">
    <location>
        <begin position="275"/>
        <end position="286"/>
    </location>
</feature>
<feature type="transmembrane region" description="Helical; Name=7" evidence="1">
    <location>
        <begin position="287"/>
        <end position="308"/>
    </location>
</feature>
<feature type="topological domain" description="Cytoplasmic" evidence="8">
    <location>
        <begin position="309"/>
        <end position="354"/>
    </location>
</feature>
<feature type="region of interest" description="Disordered" evidence="7">
    <location>
        <begin position="329"/>
        <end position="354"/>
    </location>
</feature>
<feature type="short sequence motif" description="'Ionic lock' involved in activated form stabilization" evidence="1">
    <location>
        <begin position="134"/>
        <end position="136"/>
    </location>
</feature>
<feature type="compositionally biased region" description="Low complexity" evidence="7">
    <location>
        <begin position="334"/>
        <end position="354"/>
    </location>
</feature>
<feature type="site" description="Plays an important role in the conformation switch to the active conformation" evidence="1">
    <location>
        <position position="113"/>
    </location>
</feature>
<feature type="modified residue" description="N6-(retinylidene)lysine" evidence="1">
    <location>
        <position position="296"/>
    </location>
</feature>
<feature type="lipid moiety-binding region" description="S-palmitoyl cysteine" evidence="1">
    <location>
        <position position="322"/>
    </location>
</feature>
<feature type="lipid moiety-binding region" description="S-palmitoyl cysteine" evidence="1">
    <location>
        <position position="323"/>
    </location>
</feature>
<feature type="glycosylation site" description="N-linked (GlcNAc...) asparagine" evidence="5">
    <location>
        <position position="2"/>
    </location>
</feature>
<feature type="glycosylation site" description="N-linked (GlcNAc...) asparagine" evidence="5">
    <location>
        <position position="15"/>
    </location>
</feature>
<feature type="glycosylation site" description="N-linked (GlcNAc...) asparagine" evidence="5">
    <location>
        <position position="200"/>
    </location>
</feature>
<feature type="disulfide bond" evidence="6">
    <location>
        <begin position="110"/>
        <end position="187"/>
    </location>
</feature>
<organism>
    <name type="scientific">Mullus surmuletus</name>
    <name type="common">Striped red mullet</name>
    <dbReference type="NCBI Taxonomy" id="87757"/>
    <lineage>
        <taxon>Eukaryota</taxon>
        <taxon>Metazoa</taxon>
        <taxon>Chordata</taxon>
        <taxon>Craniata</taxon>
        <taxon>Vertebrata</taxon>
        <taxon>Euteleostomi</taxon>
        <taxon>Actinopterygii</taxon>
        <taxon>Neopterygii</taxon>
        <taxon>Teleostei</taxon>
        <taxon>Neoteleostei</taxon>
        <taxon>Acanthomorphata</taxon>
        <taxon>Syngnathiaria</taxon>
        <taxon>Syngnathiformes</taxon>
        <taxon>Mulloidea</taxon>
        <taxon>Mullidae</taxon>
        <taxon>Mullus</taxon>
    </lineage>
</organism>
<sequence>MNGTEGPYFYIPMVNTTGIVRSPYDYPQYYLVNPAAYAALGAYMFFLILVGFPINFLTLYVTIEHKKLRTPLNYILLNLAVANLFMVFGGFTTTMYTSMHGYFVLGRLGCNLEGFFATLGGEIALWSLVVLAVERWMVVCKPISNFRFGENHAIMGLAMTWLMASACAVPPLVGWSRYIPEGMQCSCGVDYYTRAEGFNNESFVVYMFCCHFMIPLIIVFFCYGRLLCAVKEAAAAQQESETTQRAEREVTRMVVIMVIAFLVCWLPYASVAWWIFTHQGSEFGPVFMTIPAFFAKSSSIYNPMIYICMNKQFRNCMITTLCCGKNPFEEEEGASSTASKTEASSVSSSSVSPA</sequence>
<gene>
    <name type="primary">rho</name>
</gene>
<reference key="1">
    <citation type="submission" date="1999-01" db="EMBL/GenBank/DDBJ databases">
        <title>Comparative analysis of opsins in Mediterranian coastal fish.</title>
        <authorList>
            <person name="Archer S.N."/>
            <person name="Hirano J."/>
        </authorList>
    </citation>
    <scope>NUCLEOTIDE SEQUENCE [MRNA]</scope>
    <source>
        <tissue>Retina</tissue>
    </source>
</reference>
<dbReference type="EMBL" id="Y18666">
    <property type="protein sequence ID" value="CAA77248.1"/>
    <property type="molecule type" value="mRNA"/>
</dbReference>
<dbReference type="SMR" id="Q9YH01"/>
<dbReference type="GlyCosmos" id="Q9YH01">
    <property type="glycosylation" value="3 sites, No reported glycans"/>
</dbReference>
<dbReference type="GO" id="GO:0016020">
    <property type="term" value="C:membrane"/>
    <property type="evidence" value="ECO:0000250"/>
    <property type="project" value="UniProtKB"/>
</dbReference>
<dbReference type="GO" id="GO:0097381">
    <property type="term" value="C:photoreceptor disc membrane"/>
    <property type="evidence" value="ECO:0000250"/>
    <property type="project" value="UniProtKB"/>
</dbReference>
<dbReference type="GO" id="GO:0005886">
    <property type="term" value="C:plasma membrane"/>
    <property type="evidence" value="ECO:0000250"/>
    <property type="project" value="UniProtKB"/>
</dbReference>
<dbReference type="GO" id="GO:0005502">
    <property type="term" value="F:11-cis retinal binding"/>
    <property type="evidence" value="ECO:0000250"/>
    <property type="project" value="UniProtKB"/>
</dbReference>
<dbReference type="GO" id="GO:0008020">
    <property type="term" value="F:G protein-coupled photoreceptor activity"/>
    <property type="evidence" value="ECO:0000250"/>
    <property type="project" value="UniProtKB"/>
</dbReference>
<dbReference type="GO" id="GO:0016038">
    <property type="term" value="P:absorption of visible light"/>
    <property type="evidence" value="ECO:0000250"/>
    <property type="project" value="UniProtKB"/>
</dbReference>
<dbReference type="GO" id="GO:0016056">
    <property type="term" value="P:G protein-coupled opsin signaling pathway"/>
    <property type="evidence" value="ECO:0000250"/>
    <property type="project" value="UniProtKB"/>
</dbReference>
<dbReference type="GO" id="GO:0007601">
    <property type="term" value="P:visual perception"/>
    <property type="evidence" value="ECO:0007669"/>
    <property type="project" value="UniProtKB-KW"/>
</dbReference>
<dbReference type="CDD" id="cd15080">
    <property type="entry name" value="7tmA_MWS_opsin"/>
    <property type="match status" value="1"/>
</dbReference>
<dbReference type="FunFam" id="1.20.1070.10:FF:000018">
    <property type="entry name" value="Rhodopsin"/>
    <property type="match status" value="1"/>
</dbReference>
<dbReference type="Gene3D" id="1.20.1070.10">
    <property type="entry name" value="Rhodopsin 7-helix transmembrane proteins"/>
    <property type="match status" value="1"/>
</dbReference>
<dbReference type="InterPro" id="IPR050125">
    <property type="entry name" value="GPCR_opsins"/>
</dbReference>
<dbReference type="InterPro" id="IPR000276">
    <property type="entry name" value="GPCR_Rhodpsn"/>
</dbReference>
<dbReference type="InterPro" id="IPR017452">
    <property type="entry name" value="GPCR_Rhodpsn_7TM"/>
</dbReference>
<dbReference type="InterPro" id="IPR001760">
    <property type="entry name" value="Opsin"/>
</dbReference>
<dbReference type="InterPro" id="IPR027430">
    <property type="entry name" value="Retinal_BS"/>
</dbReference>
<dbReference type="InterPro" id="IPR000732">
    <property type="entry name" value="Rhodopsin"/>
</dbReference>
<dbReference type="InterPro" id="IPR019477">
    <property type="entry name" value="Rhodopsin_N"/>
</dbReference>
<dbReference type="PANTHER" id="PTHR24240">
    <property type="entry name" value="OPSIN"/>
    <property type="match status" value="1"/>
</dbReference>
<dbReference type="Pfam" id="PF00001">
    <property type="entry name" value="7tm_1"/>
    <property type="match status" value="1"/>
</dbReference>
<dbReference type="Pfam" id="PF10413">
    <property type="entry name" value="Rhodopsin_N"/>
    <property type="match status" value="1"/>
</dbReference>
<dbReference type="PRINTS" id="PR00237">
    <property type="entry name" value="GPCRRHODOPSN"/>
</dbReference>
<dbReference type="PRINTS" id="PR00238">
    <property type="entry name" value="OPSIN"/>
</dbReference>
<dbReference type="PRINTS" id="PR00579">
    <property type="entry name" value="RHODOPSIN"/>
</dbReference>
<dbReference type="SUPFAM" id="SSF81321">
    <property type="entry name" value="Family A G protein-coupled receptor-like"/>
    <property type="match status" value="1"/>
</dbReference>
<dbReference type="PROSITE" id="PS00237">
    <property type="entry name" value="G_PROTEIN_RECEP_F1_1"/>
    <property type="match status" value="1"/>
</dbReference>
<dbReference type="PROSITE" id="PS50262">
    <property type="entry name" value="G_PROTEIN_RECEP_F1_2"/>
    <property type="match status" value="1"/>
</dbReference>
<dbReference type="PROSITE" id="PS00238">
    <property type="entry name" value="OPSIN"/>
    <property type="match status" value="1"/>
</dbReference>